<dbReference type="EC" id="7.1.1.-" evidence="1"/>
<dbReference type="EMBL" id="AP009373">
    <property type="protein sequence ID" value="BAF50432.1"/>
    <property type="molecule type" value="Genomic_DNA"/>
</dbReference>
<dbReference type="RefSeq" id="YP_001123607.1">
    <property type="nucleotide sequence ID" value="NC_009272.1"/>
</dbReference>
<dbReference type="SMR" id="A4QL77"/>
<dbReference type="GeneID" id="4964672"/>
<dbReference type="GO" id="GO:0009535">
    <property type="term" value="C:chloroplast thylakoid membrane"/>
    <property type="evidence" value="ECO:0007669"/>
    <property type="project" value="UniProtKB-SubCell"/>
</dbReference>
<dbReference type="GO" id="GO:0051287">
    <property type="term" value="F:NAD binding"/>
    <property type="evidence" value="ECO:0007669"/>
    <property type="project" value="InterPro"/>
</dbReference>
<dbReference type="GO" id="GO:0016655">
    <property type="term" value="F:oxidoreductase activity, acting on NAD(P)H, quinone or similar compound as acceptor"/>
    <property type="evidence" value="ECO:0007669"/>
    <property type="project" value="UniProtKB-UniRule"/>
</dbReference>
<dbReference type="GO" id="GO:0048038">
    <property type="term" value="F:quinone binding"/>
    <property type="evidence" value="ECO:0007669"/>
    <property type="project" value="UniProtKB-KW"/>
</dbReference>
<dbReference type="GO" id="GO:0019684">
    <property type="term" value="P:photosynthesis, light reaction"/>
    <property type="evidence" value="ECO:0007669"/>
    <property type="project" value="UniProtKB-UniRule"/>
</dbReference>
<dbReference type="FunFam" id="1.10.645.10:FF:000003">
    <property type="entry name" value="NAD(P)H-quinone oxidoreductase subunit H, chloroplastic"/>
    <property type="match status" value="1"/>
</dbReference>
<dbReference type="Gene3D" id="1.10.645.10">
    <property type="entry name" value="Cytochrome-c3 Hydrogenase, chain B"/>
    <property type="match status" value="1"/>
</dbReference>
<dbReference type="HAMAP" id="MF_01358">
    <property type="entry name" value="NDH1_NuoD"/>
    <property type="match status" value="1"/>
</dbReference>
<dbReference type="InterPro" id="IPR001135">
    <property type="entry name" value="NADH_Q_OxRdtase_suD"/>
</dbReference>
<dbReference type="InterPro" id="IPR014029">
    <property type="entry name" value="NADH_UbQ_OxRdtase_49kDa_CS"/>
</dbReference>
<dbReference type="InterPro" id="IPR022885">
    <property type="entry name" value="NDH1_su_D/H"/>
</dbReference>
<dbReference type="InterPro" id="IPR029014">
    <property type="entry name" value="NiFe-Hase_large"/>
</dbReference>
<dbReference type="NCBIfam" id="NF004739">
    <property type="entry name" value="PRK06075.1"/>
    <property type="match status" value="1"/>
</dbReference>
<dbReference type="NCBIfam" id="NF005649">
    <property type="entry name" value="PRK07415.1"/>
    <property type="match status" value="1"/>
</dbReference>
<dbReference type="PANTHER" id="PTHR11993:SF10">
    <property type="entry name" value="NADH DEHYDROGENASE [UBIQUINONE] IRON-SULFUR PROTEIN 2, MITOCHONDRIAL"/>
    <property type="match status" value="1"/>
</dbReference>
<dbReference type="PANTHER" id="PTHR11993">
    <property type="entry name" value="NADH-UBIQUINONE OXIDOREDUCTASE 49 KDA SUBUNIT"/>
    <property type="match status" value="1"/>
</dbReference>
<dbReference type="Pfam" id="PF00346">
    <property type="entry name" value="Complex1_49kDa"/>
    <property type="match status" value="1"/>
</dbReference>
<dbReference type="SUPFAM" id="SSF56762">
    <property type="entry name" value="HydB/Nqo4-like"/>
    <property type="match status" value="1"/>
</dbReference>
<dbReference type="PROSITE" id="PS00535">
    <property type="entry name" value="COMPLEX1_49K"/>
    <property type="match status" value="1"/>
</dbReference>
<protein>
    <recommendedName>
        <fullName evidence="1">NAD(P)H-quinone oxidoreductase subunit H, chloroplastic</fullName>
        <ecNumber evidence="1">7.1.1.-</ecNumber>
    </recommendedName>
    <alternativeName>
        <fullName>NAD(P)H dehydrogenase subunit H</fullName>
    </alternativeName>
    <alternativeName>
        <fullName evidence="1">NADH-plastoquinone oxidoreductase 49 kDa subunit</fullName>
    </alternativeName>
    <alternativeName>
        <fullName evidence="1">NADH-plastoquinone oxidoreductase subunit H</fullName>
    </alternativeName>
</protein>
<reference key="1">
    <citation type="submission" date="2007-03" db="EMBL/GenBank/DDBJ databases">
        <title>Sequencing analysis of Draba nemoroza chloroplast DNA.</title>
        <authorList>
            <person name="Hosouchi T."/>
            <person name="Tsuruoka H."/>
            <person name="Kotani H."/>
        </authorList>
    </citation>
    <scope>NUCLEOTIDE SEQUENCE [LARGE SCALE GENOMIC DNA]</scope>
</reference>
<keyword id="KW-0150">Chloroplast</keyword>
<keyword id="KW-0472">Membrane</keyword>
<keyword id="KW-0520">NAD</keyword>
<keyword id="KW-0521">NADP</keyword>
<keyword id="KW-0934">Plastid</keyword>
<keyword id="KW-0618">Plastoquinone</keyword>
<keyword id="KW-0874">Quinone</keyword>
<keyword id="KW-0793">Thylakoid</keyword>
<keyword id="KW-1278">Translocase</keyword>
<keyword id="KW-0813">Transport</keyword>
<feature type="chain" id="PRO_0000357986" description="NAD(P)H-quinone oxidoreductase subunit H, chloroplastic">
    <location>
        <begin position="1"/>
        <end position="393"/>
    </location>
</feature>
<accession>A4QL77</accession>
<sequence>MKRPVTGKDLMIVNMGPHHPSMHGVLRLIVTLDGEDVVDCEPILGYLHRGMEKIAENRAIIQYLPYVTRWDYLATMFTEAITVNGPEQLGNIQIPKRASYIRVIMLELSRIASHLLWLGPFMADIGAQTPFFYIFREREFVYDLFEAATGMRMMHNFFRIGGIAADLPYGWIDKCLDFCDYFLTEVVEYQKLITRNPIFLERVEGVGIIDGEEAINWGLSGPMLRASGIPWDLRKVDRYESYDEFEWEIQWQKQGDSLARYLVRLSEMTESIKIIQQALEGLPGGPYENLESRGFDRKRNPEWNDFEYRFISKKPSPTFELSKQELYVRVEAPKGELGIFLIGDQSGFPWRWKIRPPGFINLQILPELVKRMKLADIMTILGSIDIIMGEVDR</sequence>
<evidence type="ECO:0000255" key="1">
    <source>
        <dbReference type="HAMAP-Rule" id="MF_01358"/>
    </source>
</evidence>
<proteinExistence type="inferred from homology"/>
<comment type="function">
    <text evidence="1">NDH shuttles electrons from NAD(P)H:plastoquinone, via FMN and iron-sulfur (Fe-S) centers, to quinones in the photosynthetic chain and possibly in a chloroplast respiratory chain. The immediate electron acceptor for the enzyme in this species is believed to be plastoquinone. Couples the redox reaction to proton translocation, and thus conserves the redox energy in a proton gradient.</text>
</comment>
<comment type="catalytic activity">
    <reaction evidence="1">
        <text>a plastoquinone + NADH + (n+1) H(+)(in) = a plastoquinol + NAD(+) + n H(+)(out)</text>
        <dbReference type="Rhea" id="RHEA:42608"/>
        <dbReference type="Rhea" id="RHEA-COMP:9561"/>
        <dbReference type="Rhea" id="RHEA-COMP:9562"/>
        <dbReference type="ChEBI" id="CHEBI:15378"/>
        <dbReference type="ChEBI" id="CHEBI:17757"/>
        <dbReference type="ChEBI" id="CHEBI:57540"/>
        <dbReference type="ChEBI" id="CHEBI:57945"/>
        <dbReference type="ChEBI" id="CHEBI:62192"/>
    </reaction>
</comment>
<comment type="catalytic activity">
    <reaction evidence="1">
        <text>a plastoquinone + NADPH + (n+1) H(+)(in) = a plastoquinol + NADP(+) + n H(+)(out)</text>
        <dbReference type="Rhea" id="RHEA:42612"/>
        <dbReference type="Rhea" id="RHEA-COMP:9561"/>
        <dbReference type="Rhea" id="RHEA-COMP:9562"/>
        <dbReference type="ChEBI" id="CHEBI:15378"/>
        <dbReference type="ChEBI" id="CHEBI:17757"/>
        <dbReference type="ChEBI" id="CHEBI:57783"/>
        <dbReference type="ChEBI" id="CHEBI:58349"/>
        <dbReference type="ChEBI" id="CHEBI:62192"/>
    </reaction>
</comment>
<comment type="subunit">
    <text evidence="1">NDH is composed of at least 16 different subunits, 5 of which are encoded in the nucleus.</text>
</comment>
<comment type="subcellular location">
    <subcellularLocation>
        <location evidence="1">Plastid</location>
        <location evidence="1">Chloroplast thylakoid membrane</location>
        <topology evidence="1">Peripheral membrane protein</topology>
        <orientation evidence="1">Stromal side</orientation>
    </subcellularLocation>
</comment>
<comment type="similarity">
    <text evidence="1">Belongs to the complex I 49 kDa subunit family.</text>
</comment>
<name>NDHH_DRANE</name>
<geneLocation type="chloroplast"/>
<organism>
    <name type="scientific">Draba nemorosa</name>
    <name type="common">Woodland whitlowgrass</name>
    <dbReference type="NCBI Taxonomy" id="171822"/>
    <lineage>
        <taxon>Eukaryota</taxon>
        <taxon>Viridiplantae</taxon>
        <taxon>Streptophyta</taxon>
        <taxon>Embryophyta</taxon>
        <taxon>Tracheophyta</taxon>
        <taxon>Spermatophyta</taxon>
        <taxon>Magnoliopsida</taxon>
        <taxon>eudicotyledons</taxon>
        <taxon>Gunneridae</taxon>
        <taxon>Pentapetalae</taxon>
        <taxon>rosids</taxon>
        <taxon>malvids</taxon>
        <taxon>Brassicales</taxon>
        <taxon>Brassicaceae</taxon>
        <taxon>Arabideae</taxon>
        <taxon>Draba</taxon>
    </lineage>
</organism>
<gene>
    <name evidence="1" type="primary">ndhH</name>
</gene>